<reference key="1">
    <citation type="journal article" date="1990" name="Hereditas">
        <title>Isolation, characterization and chromosomal assignment of a partial cDNA for porcine 6-phosphogluconate dehydrogenase.</title>
        <authorList>
            <person name="Harbitz I."/>
            <person name="Chowdhary B."/>
            <person name="Chowdhary R."/>
            <person name="Kran S."/>
            <person name="Frengen E."/>
            <person name="Gustavsson I."/>
            <person name="Davies W."/>
        </authorList>
    </citation>
    <scope>NUCLEOTIDE SEQUENCE [MRNA]</scope>
    <source>
        <tissue>Liver</tissue>
    </source>
</reference>
<reference key="2">
    <citation type="journal article" date="1991" name="Mol. Microbiol.">
        <title>Analysis of the gluconate (gnt) operon of Bacillus subtilis.</title>
        <authorList>
            <person name="Reizer A."/>
            <person name="Deutscher J."/>
            <person name="Saier M.H. Jr."/>
            <person name="Reizer J."/>
        </authorList>
    </citation>
    <scope>IDENTIFICATION OF PROBABLE FRAMESHIFTS</scope>
</reference>
<organism>
    <name type="scientific">Sus scrofa</name>
    <name type="common">Pig</name>
    <dbReference type="NCBI Taxonomy" id="9823"/>
    <lineage>
        <taxon>Eukaryota</taxon>
        <taxon>Metazoa</taxon>
        <taxon>Chordata</taxon>
        <taxon>Craniata</taxon>
        <taxon>Vertebrata</taxon>
        <taxon>Euteleostomi</taxon>
        <taxon>Mammalia</taxon>
        <taxon>Eutheria</taxon>
        <taxon>Laurasiatheria</taxon>
        <taxon>Artiodactyla</taxon>
        <taxon>Suina</taxon>
        <taxon>Suidae</taxon>
        <taxon>Sus</taxon>
    </lineage>
</organism>
<evidence type="ECO:0000250" key="1"/>
<evidence type="ECO:0000250" key="2">
    <source>
        <dbReference type="UniProtKB" id="P52209"/>
    </source>
</evidence>
<evidence type="ECO:0000305" key="3"/>
<name>6PGD_PIG</name>
<gene>
    <name type="primary">PGD</name>
</gene>
<proteinExistence type="evidence at transcript level"/>
<keyword id="KW-0007">Acetylation</keyword>
<keyword id="KW-0963">Cytoplasm</keyword>
<keyword id="KW-0311">Gluconate utilization</keyword>
<keyword id="KW-0521">NADP</keyword>
<keyword id="KW-0560">Oxidoreductase</keyword>
<keyword id="KW-0570">Pentose shunt</keyword>
<keyword id="KW-1185">Reference proteome</keyword>
<feature type="chain" id="PRO_0000090065" description="6-phosphogluconate dehydrogenase, decarboxylating">
    <location>
        <begin position="1" status="less than"/>
        <end position="250"/>
    </location>
</feature>
<feature type="binding site" description="in other chain" evidence="1">
    <location>
        <position position="29"/>
    </location>
    <ligand>
        <name>substrate</name>
        <note>ligand shared between dimeric partners</note>
    </ligand>
</feature>
<feature type="binding site" description="in other chain" evidence="1">
    <location>
        <position position="56"/>
    </location>
    <ligand>
        <name>substrate</name>
        <note>ligand shared between dimeric partners</note>
    </ligand>
</feature>
<feature type="binding site" evidence="1">
    <location>
        <position position="214"/>
    </location>
    <ligand>
        <name>substrate</name>
        <note>ligand shared between dimeric partners</note>
    </ligand>
</feature>
<feature type="binding site" evidence="1">
    <location>
        <position position="220"/>
    </location>
    <ligand>
        <name>substrate</name>
        <note>ligand shared between dimeric partners</note>
    </ligand>
</feature>
<feature type="binding site" evidence="1">
    <location>
        <begin position="245"/>
        <end position="248"/>
    </location>
    <ligand>
        <name>NADP(+)</name>
        <dbReference type="ChEBI" id="CHEBI:58349"/>
        <note>ligand shared between dimeric partners</note>
    </ligand>
</feature>
<feature type="modified residue" description="N6-acetyllysine" evidence="2">
    <location>
        <position position="77"/>
    </location>
</feature>
<feature type="non-terminal residue">
    <location>
        <position position="1"/>
    </location>
</feature>
<comment type="function">
    <text evidence="1">Catalyzes the oxidative decarboxylation of 6-phosphogluconate to ribulose 5-phosphate and CO(2), with concomitant reduction of NADP to NADPH.</text>
</comment>
<comment type="catalytic activity">
    <reaction>
        <text>6-phospho-D-gluconate + NADP(+) = D-ribulose 5-phosphate + CO2 + NADPH</text>
        <dbReference type="Rhea" id="RHEA:10116"/>
        <dbReference type="ChEBI" id="CHEBI:16526"/>
        <dbReference type="ChEBI" id="CHEBI:57783"/>
        <dbReference type="ChEBI" id="CHEBI:58121"/>
        <dbReference type="ChEBI" id="CHEBI:58349"/>
        <dbReference type="ChEBI" id="CHEBI:58759"/>
        <dbReference type="EC" id="1.1.1.44"/>
    </reaction>
</comment>
<comment type="pathway">
    <text>Carbohydrate degradation; pentose phosphate pathway; D-ribulose 5-phosphate from D-glucose 6-phosphate (oxidative stage): step 3/3.</text>
</comment>
<comment type="subunit">
    <text>Homodimer.</text>
</comment>
<comment type="subcellular location">
    <subcellularLocation>
        <location evidence="1">Cytoplasm</location>
    </subcellularLocation>
</comment>
<comment type="similarity">
    <text evidence="3">Belongs to the 6-phosphogluconate dehydrogenase family.</text>
</comment>
<comment type="sequence caution" evidence="3">
    <conflict type="frameshift">
        <sequence resource="EMBL-CDS" id="CAA34633"/>
    </conflict>
</comment>
<dbReference type="EC" id="1.1.1.44"/>
<dbReference type="EMBL" id="X16638">
    <property type="protein sequence ID" value="CAA34633.1"/>
    <property type="status" value="ALT_FRAME"/>
    <property type="molecule type" value="mRNA"/>
</dbReference>
<dbReference type="PIR" id="A48325">
    <property type="entry name" value="A48325"/>
</dbReference>
<dbReference type="SMR" id="P14332"/>
<dbReference type="STRING" id="9823.ENSSSCP00000066512"/>
<dbReference type="PaxDb" id="9823-ENSSSCP00000003687"/>
<dbReference type="PeptideAtlas" id="P14332"/>
<dbReference type="eggNOG" id="KOG2653">
    <property type="taxonomic scope" value="Eukaryota"/>
</dbReference>
<dbReference type="InParanoid" id="P14332"/>
<dbReference type="UniPathway" id="UPA00115">
    <property type="reaction ID" value="UER00410"/>
</dbReference>
<dbReference type="Proteomes" id="UP000008227">
    <property type="component" value="Unplaced"/>
</dbReference>
<dbReference type="Proteomes" id="UP000314985">
    <property type="component" value="Unplaced"/>
</dbReference>
<dbReference type="Proteomes" id="UP000694570">
    <property type="component" value="Unplaced"/>
</dbReference>
<dbReference type="Proteomes" id="UP000694571">
    <property type="component" value="Unplaced"/>
</dbReference>
<dbReference type="Proteomes" id="UP000694720">
    <property type="component" value="Unplaced"/>
</dbReference>
<dbReference type="Proteomes" id="UP000694722">
    <property type="component" value="Unplaced"/>
</dbReference>
<dbReference type="Proteomes" id="UP000694723">
    <property type="component" value="Unplaced"/>
</dbReference>
<dbReference type="Proteomes" id="UP000694724">
    <property type="component" value="Unplaced"/>
</dbReference>
<dbReference type="Proteomes" id="UP000694725">
    <property type="component" value="Unplaced"/>
</dbReference>
<dbReference type="Proteomes" id="UP000694726">
    <property type="component" value="Unplaced"/>
</dbReference>
<dbReference type="Proteomes" id="UP000694727">
    <property type="component" value="Unplaced"/>
</dbReference>
<dbReference type="Proteomes" id="UP000694728">
    <property type="component" value="Unplaced"/>
</dbReference>
<dbReference type="GO" id="GO:0005829">
    <property type="term" value="C:cytosol"/>
    <property type="evidence" value="ECO:0000318"/>
    <property type="project" value="GO_Central"/>
</dbReference>
<dbReference type="GO" id="GO:0050661">
    <property type="term" value="F:NADP binding"/>
    <property type="evidence" value="ECO:0000318"/>
    <property type="project" value="GO_Central"/>
</dbReference>
<dbReference type="GO" id="GO:0004616">
    <property type="term" value="F:phosphogluconate dehydrogenase (decarboxylating) activity"/>
    <property type="evidence" value="ECO:0000250"/>
    <property type="project" value="UniProtKB"/>
</dbReference>
<dbReference type="GO" id="GO:0019521">
    <property type="term" value="P:D-gluconate metabolic process"/>
    <property type="evidence" value="ECO:0007669"/>
    <property type="project" value="UniProtKB-KW"/>
</dbReference>
<dbReference type="GO" id="GO:0006098">
    <property type="term" value="P:pentose-phosphate shunt"/>
    <property type="evidence" value="ECO:0000250"/>
    <property type="project" value="UniProtKB"/>
</dbReference>
<dbReference type="GO" id="GO:0009051">
    <property type="term" value="P:pentose-phosphate shunt, oxidative branch"/>
    <property type="evidence" value="ECO:0000318"/>
    <property type="project" value="GO_Central"/>
</dbReference>
<dbReference type="FunFam" id="1.10.1040.10:FF:000032">
    <property type="entry name" value="6-phosphogluconate dehydrogenase, decarboxylating"/>
    <property type="match status" value="1"/>
</dbReference>
<dbReference type="FunFam" id="1.20.5.320:FF:000002">
    <property type="entry name" value="6-phosphogluconate dehydrogenase, decarboxylating"/>
    <property type="match status" value="1"/>
</dbReference>
<dbReference type="Gene3D" id="1.20.5.320">
    <property type="entry name" value="6-Phosphogluconate Dehydrogenase, domain 3"/>
    <property type="match status" value="1"/>
</dbReference>
<dbReference type="Gene3D" id="1.10.1040.10">
    <property type="entry name" value="N-(1-d-carboxylethyl)-l-norvaline Dehydrogenase, domain 2"/>
    <property type="match status" value="1"/>
</dbReference>
<dbReference type="InterPro" id="IPR008927">
    <property type="entry name" value="6-PGluconate_DH-like_C_sf"/>
</dbReference>
<dbReference type="InterPro" id="IPR013328">
    <property type="entry name" value="6PGD_dom2"/>
</dbReference>
<dbReference type="InterPro" id="IPR006114">
    <property type="entry name" value="6PGDH_C"/>
</dbReference>
<dbReference type="InterPro" id="IPR006184">
    <property type="entry name" value="6PGdom_BS"/>
</dbReference>
<dbReference type="InterPro" id="IPR006183">
    <property type="entry name" value="Pgluconate_DH"/>
</dbReference>
<dbReference type="PANTHER" id="PTHR11811">
    <property type="entry name" value="6-PHOSPHOGLUCONATE DEHYDROGENASE"/>
    <property type="match status" value="1"/>
</dbReference>
<dbReference type="Pfam" id="PF00393">
    <property type="entry name" value="6PGD"/>
    <property type="match status" value="1"/>
</dbReference>
<dbReference type="PRINTS" id="PR00076">
    <property type="entry name" value="6PGDHDRGNASE"/>
</dbReference>
<dbReference type="SMART" id="SM01350">
    <property type="entry name" value="6PGD"/>
    <property type="match status" value="1"/>
</dbReference>
<dbReference type="SUPFAM" id="SSF48179">
    <property type="entry name" value="6-phosphogluconate dehydrogenase C-terminal domain-like"/>
    <property type="match status" value="1"/>
</dbReference>
<dbReference type="PROSITE" id="PS00461">
    <property type="entry name" value="6PGD"/>
    <property type="match status" value="1"/>
</dbReference>
<accession>P14332</accession>
<sequence length="250" mass="27806">IEITANILKFQDADGKHLLPKIRDSAGQKGTGKWTAISALEYGVPVTLIGEAVFARCLSSLKDERVQASKKLKGPQKIQFSGDKKSFLEDIRKALYASKIISYTQGFMLLRQAAAEFGWSSTTEHRLMWRGGCIIRSVFLGKIKDAFDRNPGLQNLLLDDFFKSAVEDCQDSWRRAVSTGVQTGIPMPCFTTALSFYDGYRHEMLPANLIQAQRDYFGAHTYELLAKPGHFVHTNWTGHGGSVSSSSYNA</sequence>
<protein>
    <recommendedName>
        <fullName>6-phosphogluconate dehydrogenase, decarboxylating</fullName>
        <ecNumber>1.1.1.44</ecNumber>
    </recommendedName>
</protein>